<protein>
    <recommendedName>
        <fullName>Uncharacterized GTP-binding protein P8A3.05</fullName>
    </recommendedName>
</protein>
<accession>Q9UT10</accession>
<keyword id="KW-0963">Cytoplasm</keyword>
<keyword id="KW-0342">GTP-binding</keyword>
<keyword id="KW-0547">Nucleotide-binding</keyword>
<keyword id="KW-0539">Nucleus</keyword>
<keyword id="KW-1185">Reference proteome</keyword>
<dbReference type="EMBL" id="CU329670">
    <property type="protein sequence ID" value="CAB55172.1"/>
    <property type="molecule type" value="Genomic_DNA"/>
</dbReference>
<dbReference type="PIR" id="T39242">
    <property type="entry name" value="T39242"/>
</dbReference>
<dbReference type="SMR" id="Q9UT10"/>
<dbReference type="BioGRID" id="278189">
    <property type="interactions" value="4"/>
</dbReference>
<dbReference type="STRING" id="284812.Q9UT10"/>
<dbReference type="iPTMnet" id="Q9UT10"/>
<dbReference type="PaxDb" id="4896-SPAP8A3.05.1"/>
<dbReference type="EnsemblFungi" id="SPAP8A3.05.1">
    <property type="protein sequence ID" value="SPAP8A3.05.1:pep"/>
    <property type="gene ID" value="SPAP8A3.05"/>
</dbReference>
<dbReference type="KEGG" id="spo:2541693"/>
<dbReference type="PomBase" id="SPAP8A3.05"/>
<dbReference type="VEuPathDB" id="FungiDB:SPAP8A3.05"/>
<dbReference type="eggNOG" id="KOG0458">
    <property type="taxonomic scope" value="Eukaryota"/>
</dbReference>
<dbReference type="HOGENOM" id="CLU_399096_0_0_1"/>
<dbReference type="InParanoid" id="Q9UT10"/>
<dbReference type="PhylomeDB" id="Q9UT10"/>
<dbReference type="Reactome" id="R-SPO-429958">
    <property type="pathway name" value="mRNA decay by 3' to 5' exoribonuclease"/>
</dbReference>
<dbReference type="PRO" id="PR:Q9UT10"/>
<dbReference type="Proteomes" id="UP000002485">
    <property type="component" value="Chromosome I"/>
</dbReference>
<dbReference type="GO" id="GO:0005829">
    <property type="term" value="C:cytosol"/>
    <property type="evidence" value="ECO:0007005"/>
    <property type="project" value="PomBase"/>
</dbReference>
<dbReference type="GO" id="GO:0005634">
    <property type="term" value="C:nucleus"/>
    <property type="evidence" value="ECO:0007005"/>
    <property type="project" value="PomBase"/>
</dbReference>
<dbReference type="GO" id="GO:0005525">
    <property type="term" value="F:GTP binding"/>
    <property type="evidence" value="ECO:0000250"/>
    <property type="project" value="PomBase"/>
</dbReference>
<dbReference type="GO" id="GO:0003924">
    <property type="term" value="F:GTPase activity"/>
    <property type="evidence" value="ECO:0000318"/>
    <property type="project" value="GO_Central"/>
</dbReference>
<dbReference type="GO" id="GO:0030968">
    <property type="term" value="P:endoplasmic reticulum unfolded protein response"/>
    <property type="evidence" value="ECO:0000315"/>
    <property type="project" value="PomBase"/>
</dbReference>
<dbReference type="GO" id="GO:0070478">
    <property type="term" value="P:nuclear-transcribed mRNA catabolic process, 3'-5' exonucleolytic nonsense-mediated decay"/>
    <property type="evidence" value="ECO:0000266"/>
    <property type="project" value="PomBase"/>
</dbReference>
<dbReference type="GO" id="GO:0070481">
    <property type="term" value="P:nuclear-transcribed mRNA catabolic process, non-stop decay"/>
    <property type="evidence" value="ECO:0000266"/>
    <property type="project" value="PomBase"/>
</dbReference>
<dbReference type="GO" id="GO:0006412">
    <property type="term" value="P:translation"/>
    <property type="evidence" value="ECO:0000318"/>
    <property type="project" value="GO_Central"/>
</dbReference>
<dbReference type="FunFam" id="3.40.50.300:FF:006186">
    <property type="entry name" value="Uncharacterized GTP-binding protein P8A3.05"/>
    <property type="match status" value="1"/>
</dbReference>
<dbReference type="Gene3D" id="3.40.50.300">
    <property type="entry name" value="P-loop containing nucleotide triphosphate hydrolases"/>
    <property type="match status" value="1"/>
</dbReference>
<dbReference type="Gene3D" id="2.40.30.10">
    <property type="entry name" value="Translation factors"/>
    <property type="match status" value="1"/>
</dbReference>
<dbReference type="InterPro" id="IPR027417">
    <property type="entry name" value="P-loop_NTPase"/>
</dbReference>
<dbReference type="InterPro" id="IPR000795">
    <property type="entry name" value="T_Tr_GTP-bd_dom"/>
</dbReference>
<dbReference type="InterPro" id="IPR050100">
    <property type="entry name" value="TRAFAC_GTPase_members"/>
</dbReference>
<dbReference type="PANTHER" id="PTHR23115">
    <property type="entry name" value="TRANSLATION FACTOR"/>
    <property type="match status" value="1"/>
</dbReference>
<dbReference type="Pfam" id="PF00009">
    <property type="entry name" value="GTP_EFTU"/>
    <property type="match status" value="1"/>
</dbReference>
<dbReference type="SUPFAM" id="SSF52540">
    <property type="entry name" value="P-loop containing nucleoside triphosphate hydrolases"/>
    <property type="match status" value="1"/>
</dbReference>
<dbReference type="PROSITE" id="PS51722">
    <property type="entry name" value="G_TR_2"/>
    <property type="match status" value="1"/>
</dbReference>
<organism>
    <name type="scientific">Schizosaccharomyces pombe (strain 972 / ATCC 24843)</name>
    <name type="common">Fission yeast</name>
    <dbReference type="NCBI Taxonomy" id="284812"/>
    <lineage>
        <taxon>Eukaryota</taxon>
        <taxon>Fungi</taxon>
        <taxon>Dikarya</taxon>
        <taxon>Ascomycota</taxon>
        <taxon>Taphrinomycotina</taxon>
        <taxon>Schizosaccharomycetes</taxon>
        <taxon>Schizosaccharomycetales</taxon>
        <taxon>Schizosaccharomycetaceae</taxon>
        <taxon>Schizosaccharomyces</taxon>
    </lineage>
</organism>
<name>YLW5_SCHPO</name>
<proteinExistence type="inferred from homology"/>
<reference key="1">
    <citation type="journal article" date="2002" name="Nature">
        <title>The genome sequence of Schizosaccharomyces pombe.</title>
        <authorList>
            <person name="Wood V."/>
            <person name="Gwilliam R."/>
            <person name="Rajandream M.A."/>
            <person name="Lyne M.H."/>
            <person name="Lyne R."/>
            <person name="Stewart A."/>
            <person name="Sgouros J.G."/>
            <person name="Peat N."/>
            <person name="Hayles J."/>
            <person name="Baker S.G."/>
            <person name="Basham D."/>
            <person name="Bowman S."/>
            <person name="Brooks K."/>
            <person name="Brown D."/>
            <person name="Brown S."/>
            <person name="Chillingworth T."/>
            <person name="Churcher C.M."/>
            <person name="Collins M."/>
            <person name="Connor R."/>
            <person name="Cronin A."/>
            <person name="Davis P."/>
            <person name="Feltwell T."/>
            <person name="Fraser A."/>
            <person name="Gentles S."/>
            <person name="Goble A."/>
            <person name="Hamlin N."/>
            <person name="Harris D.E."/>
            <person name="Hidalgo J."/>
            <person name="Hodgson G."/>
            <person name="Holroyd S."/>
            <person name="Hornsby T."/>
            <person name="Howarth S."/>
            <person name="Huckle E.J."/>
            <person name="Hunt S."/>
            <person name="Jagels K."/>
            <person name="James K.D."/>
            <person name="Jones L."/>
            <person name="Jones M."/>
            <person name="Leather S."/>
            <person name="McDonald S."/>
            <person name="McLean J."/>
            <person name="Mooney P."/>
            <person name="Moule S."/>
            <person name="Mungall K.L."/>
            <person name="Murphy L.D."/>
            <person name="Niblett D."/>
            <person name="Odell C."/>
            <person name="Oliver K."/>
            <person name="O'Neil S."/>
            <person name="Pearson D."/>
            <person name="Quail M.A."/>
            <person name="Rabbinowitsch E."/>
            <person name="Rutherford K.M."/>
            <person name="Rutter S."/>
            <person name="Saunders D."/>
            <person name="Seeger K."/>
            <person name="Sharp S."/>
            <person name="Skelton J."/>
            <person name="Simmonds M.N."/>
            <person name="Squares R."/>
            <person name="Squares S."/>
            <person name="Stevens K."/>
            <person name="Taylor K."/>
            <person name="Taylor R.G."/>
            <person name="Tivey A."/>
            <person name="Walsh S.V."/>
            <person name="Warren T."/>
            <person name="Whitehead S."/>
            <person name="Woodward J.R."/>
            <person name="Volckaert G."/>
            <person name="Aert R."/>
            <person name="Robben J."/>
            <person name="Grymonprez B."/>
            <person name="Weltjens I."/>
            <person name="Vanstreels E."/>
            <person name="Rieger M."/>
            <person name="Schaefer M."/>
            <person name="Mueller-Auer S."/>
            <person name="Gabel C."/>
            <person name="Fuchs M."/>
            <person name="Duesterhoeft A."/>
            <person name="Fritzc C."/>
            <person name="Holzer E."/>
            <person name="Moestl D."/>
            <person name="Hilbert H."/>
            <person name="Borzym K."/>
            <person name="Langer I."/>
            <person name="Beck A."/>
            <person name="Lehrach H."/>
            <person name="Reinhardt R."/>
            <person name="Pohl T.M."/>
            <person name="Eger P."/>
            <person name="Zimmermann W."/>
            <person name="Wedler H."/>
            <person name="Wambutt R."/>
            <person name="Purnelle B."/>
            <person name="Goffeau A."/>
            <person name="Cadieu E."/>
            <person name="Dreano S."/>
            <person name="Gloux S."/>
            <person name="Lelaure V."/>
            <person name="Mottier S."/>
            <person name="Galibert F."/>
            <person name="Aves S.J."/>
            <person name="Xiang Z."/>
            <person name="Hunt C."/>
            <person name="Moore K."/>
            <person name="Hurst S.M."/>
            <person name="Lucas M."/>
            <person name="Rochet M."/>
            <person name="Gaillardin C."/>
            <person name="Tallada V.A."/>
            <person name="Garzon A."/>
            <person name="Thode G."/>
            <person name="Daga R.R."/>
            <person name="Cruzado L."/>
            <person name="Jimenez J."/>
            <person name="Sanchez M."/>
            <person name="del Rey F."/>
            <person name="Benito J."/>
            <person name="Dominguez A."/>
            <person name="Revuelta J.L."/>
            <person name="Moreno S."/>
            <person name="Armstrong J."/>
            <person name="Forsburg S.L."/>
            <person name="Cerutti L."/>
            <person name="Lowe T."/>
            <person name="McCombie W.R."/>
            <person name="Paulsen I."/>
            <person name="Potashkin J."/>
            <person name="Shpakovski G.V."/>
            <person name="Ussery D."/>
            <person name="Barrell B.G."/>
            <person name="Nurse P."/>
        </authorList>
    </citation>
    <scope>NUCLEOTIDE SEQUENCE [LARGE SCALE GENOMIC DNA]</scope>
    <source>
        <strain>972 / ATCC 24843</strain>
    </source>
</reference>
<reference key="2">
    <citation type="journal article" date="2006" name="Nat. Biotechnol.">
        <title>ORFeome cloning and global analysis of protein localization in the fission yeast Schizosaccharomyces pombe.</title>
        <authorList>
            <person name="Matsuyama A."/>
            <person name="Arai R."/>
            <person name="Yashiroda Y."/>
            <person name="Shirai A."/>
            <person name="Kamata A."/>
            <person name="Sekido S."/>
            <person name="Kobayashi Y."/>
            <person name="Hashimoto A."/>
            <person name="Hamamoto M."/>
            <person name="Hiraoka Y."/>
            <person name="Horinouchi S."/>
            <person name="Yoshida M."/>
        </authorList>
    </citation>
    <scope>SUBCELLULAR LOCATION [LARGE SCALE ANALYSIS]</scope>
</reference>
<evidence type="ECO:0000250" key="1"/>
<evidence type="ECO:0000255" key="2">
    <source>
        <dbReference type="PROSITE-ProRule" id="PRU01059"/>
    </source>
</evidence>
<evidence type="ECO:0000256" key="3">
    <source>
        <dbReference type="SAM" id="MobiDB-lite"/>
    </source>
</evidence>
<evidence type="ECO:0000269" key="4">
    <source>
    </source>
</evidence>
<gene>
    <name type="ORF">SPAP8A3.05</name>
</gene>
<sequence length="695" mass="77882">MSRLSQLLNSKKAKQKPPSEHPIGLSSILKQDSSSSSDSPNFFPSSSTNDHQERDTINDTNFVVPEKQKTSKLALLAAERKKLHSSFPSTQQQPPKTEKEKEKEPIQAKHKKNVENDFLLQRFRKVRIAEKKDSEQPSSHEIHLTDDDDKTTLQKQMVESDQLKKNPQEVKLAPPSSFAKCLTGAKKRVFEDQIEIHLSKSSLLGFNAPSPDDIVLMAQSKSKSFQKHKRLDEQLLNSVKSMKKVSQQLKPQKNTNDSNNDHTLLSQDQLIELSKLVKPRTKLLLLGPPKSGKKTLLSRLFFQIGSFDPKTMQKCTVLNAKKESLSSVLKSTKTKWYDFETFSNSYSSTIIDFPLGIFTTNASSRDNFLKHSSLFQVMNTAIFTIDCLNPLEGLDGISSILQLMNGLSISSYMFAITKMDEIEWDENKFINLVNSIQSFLKESCGIIEKSKFIPISGLKGTNLTSISQEKLSQWYKSDTLLGKIDKEADTNHGTWNFLLNLPLSLTISHITPLPENQSHIYCSIHSGMLQDSQKLYVGTGRLETQITGLSSDENPKGFNVAGDMIQAKIPTLPNLCPGILIADSIDAFTSSKTAYVNATWFHGSLEKGKSMHVIALFGCHAVLTKLYCFTDSQEKAPNAIGNDLERNRTSLVKIELENAFPLVKESYINTLSRVLFVSEKWNSLIAFGTVLSLHD</sequence>
<feature type="chain" id="PRO_0000363371" description="Uncharacterized GTP-binding protein P8A3.05">
    <location>
        <begin position="1"/>
        <end position="695"/>
    </location>
</feature>
<feature type="domain" description="tr-type G" evidence="2">
    <location>
        <begin position="278"/>
        <end position="492"/>
    </location>
</feature>
<feature type="region of interest" description="Disordered" evidence="3">
    <location>
        <begin position="1"/>
        <end position="112"/>
    </location>
</feature>
<feature type="region of interest" description="Disordered" evidence="3">
    <location>
        <begin position="242"/>
        <end position="262"/>
    </location>
</feature>
<feature type="compositionally biased region" description="Low complexity" evidence="3">
    <location>
        <begin position="32"/>
        <end position="47"/>
    </location>
</feature>
<feature type="compositionally biased region" description="Basic and acidic residues" evidence="3">
    <location>
        <begin position="96"/>
        <end position="107"/>
    </location>
</feature>
<feature type="binding site" evidence="1">
    <location>
        <begin position="287"/>
        <end position="294"/>
    </location>
    <ligand>
        <name>GTP</name>
        <dbReference type="ChEBI" id="CHEBI:37565"/>
    </ligand>
</feature>
<feature type="binding site" evidence="1">
    <location>
        <begin position="357"/>
        <end position="361"/>
    </location>
    <ligand>
        <name>GTP</name>
        <dbReference type="ChEBI" id="CHEBI:37565"/>
    </ligand>
</feature>
<feature type="binding site" evidence="1">
    <location>
        <begin position="417"/>
        <end position="420"/>
    </location>
    <ligand>
        <name>GTP</name>
        <dbReference type="ChEBI" id="CHEBI:37565"/>
    </ligand>
</feature>
<comment type="subcellular location">
    <subcellularLocation>
        <location evidence="4">Cytoplasm</location>
    </subcellularLocation>
    <subcellularLocation>
        <location evidence="4">Nucleus</location>
    </subcellularLocation>
</comment>
<comment type="similarity">
    <text evidence="2">Belongs to the TRAFAC class translation factor GTPase superfamily. Classic translation factor GTPase family.</text>
</comment>